<accession>B0RRT4</accession>
<sequence length="281" mass="29650">MTGQPSTPVRPGSVVRTVRRHRGGRSATVQDMVAAEMPVAFNYNGVPFAVMMATPEDLEDFALGFSLSEGIVDHPQDLRVVAVDTFLEGASLQIEIPPERAAALDQRRRNLDGRSGCGVCGNESIEAVLRVPPVLQSALRIDVDALARALDALHARQPIAAQTGAVHAAGWADAQGMVQLVREDVGRHNALDKLIGALARARVDATQGFAVVTSRASYEMAMKAAQARIPLLAAISAPTALAISLADSAGLTLIGFARDHDCVVYSHPQRLDLGVAVGEPA</sequence>
<feature type="chain" id="PRO_1000098794" description="Sulfur carrier protein FdhD">
    <location>
        <begin position="1"/>
        <end position="281"/>
    </location>
</feature>
<feature type="active site" description="Cysteine persulfide intermediate" evidence="1">
    <location>
        <position position="117"/>
    </location>
</feature>
<dbReference type="EMBL" id="AM920689">
    <property type="protein sequence ID" value="CAP51169.1"/>
    <property type="molecule type" value="Genomic_DNA"/>
</dbReference>
<dbReference type="SMR" id="B0RRT4"/>
<dbReference type="KEGG" id="xca:xcc-b100_1817"/>
<dbReference type="HOGENOM" id="CLU_056887_2_0_6"/>
<dbReference type="Proteomes" id="UP000001188">
    <property type="component" value="Chromosome"/>
</dbReference>
<dbReference type="GO" id="GO:0005737">
    <property type="term" value="C:cytoplasm"/>
    <property type="evidence" value="ECO:0007669"/>
    <property type="project" value="UniProtKB-SubCell"/>
</dbReference>
<dbReference type="GO" id="GO:0097163">
    <property type="term" value="F:sulfur carrier activity"/>
    <property type="evidence" value="ECO:0007669"/>
    <property type="project" value="UniProtKB-UniRule"/>
</dbReference>
<dbReference type="GO" id="GO:0016783">
    <property type="term" value="F:sulfurtransferase activity"/>
    <property type="evidence" value="ECO:0007669"/>
    <property type="project" value="InterPro"/>
</dbReference>
<dbReference type="GO" id="GO:0006777">
    <property type="term" value="P:Mo-molybdopterin cofactor biosynthetic process"/>
    <property type="evidence" value="ECO:0007669"/>
    <property type="project" value="UniProtKB-UniRule"/>
</dbReference>
<dbReference type="Gene3D" id="3.10.20.10">
    <property type="match status" value="1"/>
</dbReference>
<dbReference type="Gene3D" id="3.40.140.10">
    <property type="entry name" value="Cytidine Deaminase, domain 2"/>
    <property type="match status" value="1"/>
</dbReference>
<dbReference type="HAMAP" id="MF_00187">
    <property type="entry name" value="FdhD"/>
    <property type="match status" value="1"/>
</dbReference>
<dbReference type="InterPro" id="IPR016193">
    <property type="entry name" value="Cytidine_deaminase-like"/>
</dbReference>
<dbReference type="InterPro" id="IPR003786">
    <property type="entry name" value="FdhD"/>
</dbReference>
<dbReference type="NCBIfam" id="TIGR00129">
    <property type="entry name" value="fdhD_narQ"/>
    <property type="match status" value="1"/>
</dbReference>
<dbReference type="PANTHER" id="PTHR30592">
    <property type="entry name" value="FORMATE DEHYDROGENASE"/>
    <property type="match status" value="1"/>
</dbReference>
<dbReference type="PANTHER" id="PTHR30592:SF1">
    <property type="entry name" value="SULFUR CARRIER PROTEIN FDHD"/>
    <property type="match status" value="1"/>
</dbReference>
<dbReference type="Pfam" id="PF02634">
    <property type="entry name" value="FdhD-NarQ"/>
    <property type="match status" value="1"/>
</dbReference>
<dbReference type="PIRSF" id="PIRSF015626">
    <property type="entry name" value="FdhD"/>
    <property type="match status" value="1"/>
</dbReference>
<dbReference type="SUPFAM" id="SSF53927">
    <property type="entry name" value="Cytidine deaminase-like"/>
    <property type="match status" value="1"/>
</dbReference>
<comment type="function">
    <text evidence="1">Required for formate dehydrogenase (FDH) activity. Acts as a sulfur carrier protein that transfers sulfur from IscS to the molybdenum cofactor prior to its insertion into FDH.</text>
</comment>
<comment type="subcellular location">
    <subcellularLocation>
        <location evidence="1">Cytoplasm</location>
    </subcellularLocation>
</comment>
<comment type="similarity">
    <text evidence="1">Belongs to the FdhD family.</text>
</comment>
<name>FDHD_XANCB</name>
<gene>
    <name evidence="1" type="primary">fdhD</name>
    <name type="ordered locus">xcc-b100_1817</name>
</gene>
<organism>
    <name type="scientific">Xanthomonas campestris pv. campestris (strain B100)</name>
    <dbReference type="NCBI Taxonomy" id="509169"/>
    <lineage>
        <taxon>Bacteria</taxon>
        <taxon>Pseudomonadati</taxon>
        <taxon>Pseudomonadota</taxon>
        <taxon>Gammaproteobacteria</taxon>
        <taxon>Lysobacterales</taxon>
        <taxon>Lysobacteraceae</taxon>
        <taxon>Xanthomonas</taxon>
    </lineage>
</organism>
<protein>
    <recommendedName>
        <fullName evidence="1">Sulfur carrier protein FdhD</fullName>
    </recommendedName>
</protein>
<reference key="1">
    <citation type="journal article" date="2008" name="J. Biotechnol.">
        <title>The genome of Xanthomonas campestris pv. campestris B100 and its use for the reconstruction of metabolic pathways involved in xanthan biosynthesis.</title>
        <authorList>
            <person name="Vorhoelter F.-J."/>
            <person name="Schneiker S."/>
            <person name="Goesmann A."/>
            <person name="Krause L."/>
            <person name="Bekel T."/>
            <person name="Kaiser O."/>
            <person name="Linke B."/>
            <person name="Patschkowski T."/>
            <person name="Rueckert C."/>
            <person name="Schmid J."/>
            <person name="Sidhu V.K."/>
            <person name="Sieber V."/>
            <person name="Tauch A."/>
            <person name="Watt S.A."/>
            <person name="Weisshaar B."/>
            <person name="Becker A."/>
            <person name="Niehaus K."/>
            <person name="Puehler A."/>
        </authorList>
    </citation>
    <scope>NUCLEOTIDE SEQUENCE [LARGE SCALE GENOMIC DNA]</scope>
    <source>
        <strain>B100</strain>
    </source>
</reference>
<proteinExistence type="inferred from homology"/>
<evidence type="ECO:0000255" key="1">
    <source>
        <dbReference type="HAMAP-Rule" id="MF_00187"/>
    </source>
</evidence>
<keyword id="KW-0963">Cytoplasm</keyword>
<keyword id="KW-0501">Molybdenum cofactor biosynthesis</keyword>